<evidence type="ECO:0000250" key="1"/>
<evidence type="ECO:0000256" key="2">
    <source>
        <dbReference type="SAM" id="MobiDB-lite"/>
    </source>
</evidence>
<evidence type="ECO:0000269" key="3">
    <source>
    </source>
</evidence>
<evidence type="ECO:0000269" key="4">
    <source>
    </source>
</evidence>
<evidence type="ECO:0000305" key="5"/>
<feature type="chain" id="PRO_0000372662" description="RRP12-like protein">
    <location>
        <begin position="1"/>
        <end position="1384"/>
    </location>
</feature>
<feature type="region of interest" description="Disordered" evidence="2">
    <location>
        <begin position="1"/>
        <end position="32"/>
    </location>
</feature>
<feature type="region of interest" description="Disordered" evidence="2">
    <location>
        <begin position="1082"/>
        <end position="1102"/>
    </location>
</feature>
<feature type="region of interest" description="Disordered" evidence="2">
    <location>
        <begin position="1114"/>
        <end position="1155"/>
    </location>
</feature>
<feature type="region of interest" description="Disordered" evidence="2">
    <location>
        <begin position="1176"/>
        <end position="1384"/>
    </location>
</feature>
<feature type="compositionally biased region" description="Basic residues" evidence="2">
    <location>
        <begin position="1"/>
        <end position="13"/>
    </location>
</feature>
<feature type="compositionally biased region" description="Polar residues" evidence="2">
    <location>
        <begin position="19"/>
        <end position="29"/>
    </location>
</feature>
<feature type="compositionally biased region" description="Acidic residues" evidence="2">
    <location>
        <begin position="1090"/>
        <end position="1099"/>
    </location>
</feature>
<feature type="compositionally biased region" description="Acidic residues" evidence="2">
    <location>
        <begin position="1114"/>
        <end position="1127"/>
    </location>
</feature>
<feature type="compositionally biased region" description="Polar residues" evidence="2">
    <location>
        <begin position="1176"/>
        <end position="1191"/>
    </location>
</feature>
<feature type="compositionally biased region" description="Polar residues" evidence="2">
    <location>
        <begin position="1276"/>
        <end position="1285"/>
    </location>
</feature>
<feature type="compositionally biased region" description="Polar residues" evidence="2">
    <location>
        <begin position="1297"/>
        <end position="1315"/>
    </location>
</feature>
<feature type="compositionally biased region" description="Basic and acidic residues" evidence="2">
    <location>
        <begin position="1321"/>
        <end position="1334"/>
    </location>
</feature>
<feature type="compositionally biased region" description="Basic residues" evidence="2">
    <location>
        <begin position="1348"/>
        <end position="1362"/>
    </location>
</feature>
<feature type="compositionally biased region" description="Gly residues" evidence="2">
    <location>
        <begin position="1369"/>
        <end position="1378"/>
    </location>
</feature>
<feature type="modified residue" description="Phosphoserine" evidence="3 4">
    <location>
        <position position="82"/>
    </location>
</feature>
<feature type="modified residue" description="Phosphoserine" evidence="4">
    <location>
        <position position="85"/>
    </location>
</feature>
<feature type="modified residue" description="Phosphoserine" evidence="4">
    <location>
        <position position="96"/>
    </location>
</feature>
<feature type="modified residue" description="Phosphoserine" evidence="4">
    <location>
        <position position="1094"/>
    </location>
</feature>
<feature type="modified residue" description="Phosphoserine" evidence="4">
    <location>
        <position position="1095"/>
    </location>
</feature>
<feature type="modified residue" description="Phosphoserine" evidence="4">
    <location>
        <position position="1117"/>
    </location>
</feature>
<feature type="modified residue" description="Phosphoserine" evidence="4">
    <location>
        <position position="1119"/>
    </location>
</feature>
<feature type="modified residue" description="Phosphoserine" evidence="4">
    <location>
        <position position="1221"/>
    </location>
</feature>
<feature type="modified residue" description="Phosphoserine" evidence="4">
    <location>
        <position position="1225"/>
    </location>
</feature>
<feature type="modified residue" description="Phosphoserine" evidence="4">
    <location>
        <position position="1227"/>
    </location>
</feature>
<feature type="modified residue" description="Phosphoserine" evidence="4">
    <location>
        <position position="1230"/>
    </location>
</feature>
<feature type="modified residue" description="Phosphoserine" evidence="4">
    <location>
        <position position="1250"/>
    </location>
</feature>
<feature type="modified residue" description="Phosphoserine" evidence="4">
    <location>
        <position position="1251"/>
    </location>
</feature>
<protein>
    <recommendedName>
        <fullName>RRP12-like protein</fullName>
    </recommendedName>
</protein>
<gene>
    <name type="ORF">CG2691</name>
</gene>
<sequence length="1384" mass="153557">MGKFRSKLKRNGKGKTWSRGESATSNPTQMKHRMKAKSRFFQPNLSLAAATTTGLTMEAVHKHEQSQAFNAETTTVNDVAGSLRSFKLDDDDDGMSGSGTAPTGTAPTGTIKTFQTFASNYSGCSNTCFQKLVTSFRSSSALHKEMLAILSALTEIIRENGGGESSTEYFLLLMEQIEAATEERDIVAGVTLLAMGINSVPAPVLKKRFAQTADTMQRLLQRFMESTNQSVIRHVIGCLSVILRAQDYAAWSYSSTFQYFDAILAFSIHSQPKIRKAAQHAIALIIHGSCFMLPAIKSDDNEMDEAVEQPKVKHHPASSRVAKFCLAQFKPEVLANAQTTVLHTLELLKDTLYGFKTEDIRSVCEHLLSIMTAANVLVRTNCFQTLYSLFLKKSPNLNASLCAKLLAAIHEYRPDKSDIRQTIAWVTVLKEGHLHLATMQLDLCMQALPRLIDVCTTDLWLSDQKELVAGVSNCIKELLQDCVSRACATAEDAQCNRQSVSRIIASLHKMLNAPFGEISRFVILIFSFVFEACGKLFGSELTPPLMTICKRYDTQSAHRLQIEHTVISAIKALGPELVLTAIPLADGKGVMQLERSWLLPLLREGANGASLQFFKEKIVALAMDCQLKWKEFAEAKNNSSSHIYELLCCQLWGLFPGFCRQPRDPEYLRYLAPTLGAAVEKNPEFRPPIYDGLMELLGDNQSAECHQAIGQYAKNFLPRLFNIYTQKPNGTYEADQRKRVLEVIRLYISRAPADVQLELFENAQEQLAASALASFEYDAFFDINAAIVRVQTCKGIKAYFDKYMAPILRNDKSKLVAKDEQKLKKQQRKTYELLRELMTSELPSCQKFTRKNSIVLQQILLDSFNTSCNVCQASRLHCLKSLIDCHSNLAYNDQLVMKAIPEAVLNYKEFSNYKEQVAEQLIKSITQLYHDAGKINDFVDILTAGFAGDEMLVTNTILAFRAVLQQQGEHLTVATLEFVLQQVSVFLVQKSRKQAEAAIAFLITFIKVMPIPLVANHLEAIMRSLSAMTKDTKRYCRIQIGYLLKKLCIRFSPGELAGFVPGDDDVIHRRLKMIRKRTRRDLRKKQNLEAQEDSSDDELVSGLQEKSYTIDDMLADSDSDLPEDMDAKDEAGAAAAASKRSKNAKQQKSTYIREDPDEIVDLADLKSIGNVLTSGSAQTATPAQSQKTKAQLPNGGFKTADDGRLIISDKALRGQGGNDQSDDDSDSDASMAYGTVAKQPKVKRGMEDDSSDEDKLQQKLVPKRVRKGDDAMSMKSGKTTASSRYTAGGKGIHRQLTAGNSDAMSVKSGKSTSRPAGSEYGSKKAKGDMKKSGKLDPYAYIPLTRNNLNKRKRSMNSRKFKSVLRGAGAENGGAGGGRVSKKYK</sequence>
<keyword id="KW-0539">Nucleus</keyword>
<keyword id="KW-0597">Phosphoprotein</keyword>
<keyword id="KW-1185">Reference proteome</keyword>
<dbReference type="EMBL" id="AE014298">
    <property type="protein sequence ID" value="AAF48296.2"/>
    <property type="molecule type" value="Genomic_DNA"/>
</dbReference>
<dbReference type="EMBL" id="AY051753">
    <property type="protein sequence ID" value="AAK93177.1"/>
    <property type="status" value="ALT_INIT"/>
    <property type="molecule type" value="mRNA"/>
</dbReference>
<dbReference type="RefSeq" id="NP_001285218.1">
    <property type="nucleotide sequence ID" value="NM_001298289.1"/>
</dbReference>
<dbReference type="RefSeq" id="NP_572906.2">
    <property type="nucleotide sequence ID" value="NM_132678.3"/>
</dbReference>
<dbReference type="SMR" id="Q9VYA7"/>
<dbReference type="BioGRID" id="58697">
    <property type="interactions" value="22"/>
</dbReference>
<dbReference type="FunCoup" id="Q9VYA7">
    <property type="interactions" value="1695"/>
</dbReference>
<dbReference type="IntAct" id="Q9VYA7">
    <property type="interactions" value="42"/>
</dbReference>
<dbReference type="STRING" id="7227.FBpp0309168"/>
<dbReference type="GlyGen" id="Q9VYA7">
    <property type="glycosylation" value="1 site"/>
</dbReference>
<dbReference type="iPTMnet" id="Q9VYA7"/>
<dbReference type="PaxDb" id="7227-FBpp0073679"/>
<dbReference type="DNASU" id="32320"/>
<dbReference type="EnsemblMetazoa" id="FBtr0073848">
    <property type="protein sequence ID" value="FBpp0073679"/>
    <property type="gene ID" value="FBgn0030504"/>
</dbReference>
<dbReference type="EnsemblMetazoa" id="FBtr0340191">
    <property type="protein sequence ID" value="FBpp0309168"/>
    <property type="gene ID" value="FBgn0030504"/>
</dbReference>
<dbReference type="GeneID" id="32320"/>
<dbReference type="KEGG" id="dme:Dmel_CG2691"/>
<dbReference type="UCSC" id="CG2691-RA">
    <property type="organism name" value="d. melanogaster"/>
</dbReference>
<dbReference type="AGR" id="FB:FBgn0030504"/>
<dbReference type="FlyBase" id="FBgn0030504">
    <property type="gene designation" value="CG2691"/>
</dbReference>
<dbReference type="VEuPathDB" id="VectorBase:FBgn0030504"/>
<dbReference type="eggNOG" id="KOG1248">
    <property type="taxonomic scope" value="Eukaryota"/>
</dbReference>
<dbReference type="HOGENOM" id="CLU_003753_0_1_1"/>
<dbReference type="InParanoid" id="Q9VYA7"/>
<dbReference type="OMA" id="PDQMKHR"/>
<dbReference type="OrthoDB" id="2192888at2759"/>
<dbReference type="PhylomeDB" id="Q9VYA7"/>
<dbReference type="BioGRID-ORCS" id="32320">
    <property type="hits" value="0 hits in 1 CRISPR screen"/>
</dbReference>
<dbReference type="GenomeRNAi" id="32320"/>
<dbReference type="PRO" id="PR:Q9VYA7"/>
<dbReference type="Proteomes" id="UP000000803">
    <property type="component" value="Chromosome X"/>
</dbReference>
<dbReference type="Bgee" id="FBgn0030504">
    <property type="expression patterns" value="Expressed in egg cell and 60 other cell types or tissues"/>
</dbReference>
<dbReference type="ExpressionAtlas" id="Q9VYA7">
    <property type="expression patterns" value="baseline and differential"/>
</dbReference>
<dbReference type="GO" id="GO:0005730">
    <property type="term" value="C:nucleolus"/>
    <property type="evidence" value="ECO:0000318"/>
    <property type="project" value="GO_Central"/>
</dbReference>
<dbReference type="GO" id="GO:0005634">
    <property type="term" value="C:nucleus"/>
    <property type="evidence" value="ECO:0000250"/>
    <property type="project" value="UniProtKB"/>
</dbReference>
<dbReference type="GO" id="GO:0003723">
    <property type="term" value="F:RNA binding"/>
    <property type="evidence" value="ECO:0000318"/>
    <property type="project" value="GO_Central"/>
</dbReference>
<dbReference type="Gene3D" id="1.25.10.10">
    <property type="entry name" value="Leucine-rich Repeat Variant"/>
    <property type="match status" value="1"/>
</dbReference>
<dbReference type="InterPro" id="IPR011989">
    <property type="entry name" value="ARM-like"/>
</dbReference>
<dbReference type="InterPro" id="IPR016024">
    <property type="entry name" value="ARM-type_fold"/>
</dbReference>
<dbReference type="InterPro" id="IPR052087">
    <property type="entry name" value="RRP12"/>
</dbReference>
<dbReference type="InterPro" id="IPR012978">
    <property type="entry name" value="RRP12-like_dom"/>
</dbReference>
<dbReference type="PANTHER" id="PTHR48287">
    <property type="entry name" value="ARM REPEAT SUPERFAMILY PROTEIN"/>
    <property type="match status" value="1"/>
</dbReference>
<dbReference type="PANTHER" id="PTHR48287:SF1">
    <property type="entry name" value="ARM REPEAT SUPERFAMILY PROTEIN"/>
    <property type="match status" value="1"/>
</dbReference>
<dbReference type="Pfam" id="PF08161">
    <property type="entry name" value="RRP12_HEAT"/>
    <property type="match status" value="1"/>
</dbReference>
<dbReference type="SUPFAM" id="SSF48371">
    <property type="entry name" value="ARM repeat"/>
    <property type="match status" value="1"/>
</dbReference>
<comment type="subcellular location">
    <subcellularLocation>
        <location evidence="1">Nucleus</location>
    </subcellularLocation>
</comment>
<comment type="similarity">
    <text evidence="5">Belongs to the RRP12 family.</text>
</comment>
<comment type="sequence caution" evidence="5">
    <conflict type="erroneous initiation">
        <sequence resource="EMBL-CDS" id="AAK93177"/>
    </conflict>
</comment>
<name>RRP12_DROME</name>
<reference key="1">
    <citation type="journal article" date="2000" name="Science">
        <title>The genome sequence of Drosophila melanogaster.</title>
        <authorList>
            <person name="Adams M.D."/>
            <person name="Celniker S.E."/>
            <person name="Holt R.A."/>
            <person name="Evans C.A."/>
            <person name="Gocayne J.D."/>
            <person name="Amanatides P.G."/>
            <person name="Scherer S.E."/>
            <person name="Li P.W."/>
            <person name="Hoskins R.A."/>
            <person name="Galle R.F."/>
            <person name="George R.A."/>
            <person name="Lewis S.E."/>
            <person name="Richards S."/>
            <person name="Ashburner M."/>
            <person name="Henderson S.N."/>
            <person name="Sutton G.G."/>
            <person name="Wortman J.R."/>
            <person name="Yandell M.D."/>
            <person name="Zhang Q."/>
            <person name="Chen L.X."/>
            <person name="Brandon R.C."/>
            <person name="Rogers Y.-H.C."/>
            <person name="Blazej R.G."/>
            <person name="Champe M."/>
            <person name="Pfeiffer B.D."/>
            <person name="Wan K.H."/>
            <person name="Doyle C."/>
            <person name="Baxter E.G."/>
            <person name="Helt G."/>
            <person name="Nelson C.R."/>
            <person name="Miklos G.L.G."/>
            <person name="Abril J.F."/>
            <person name="Agbayani A."/>
            <person name="An H.-J."/>
            <person name="Andrews-Pfannkoch C."/>
            <person name="Baldwin D."/>
            <person name="Ballew R.M."/>
            <person name="Basu A."/>
            <person name="Baxendale J."/>
            <person name="Bayraktaroglu L."/>
            <person name="Beasley E.M."/>
            <person name="Beeson K.Y."/>
            <person name="Benos P.V."/>
            <person name="Berman B.P."/>
            <person name="Bhandari D."/>
            <person name="Bolshakov S."/>
            <person name="Borkova D."/>
            <person name="Botchan M.R."/>
            <person name="Bouck J."/>
            <person name="Brokstein P."/>
            <person name="Brottier P."/>
            <person name="Burtis K.C."/>
            <person name="Busam D.A."/>
            <person name="Butler H."/>
            <person name="Cadieu E."/>
            <person name="Center A."/>
            <person name="Chandra I."/>
            <person name="Cherry J.M."/>
            <person name="Cawley S."/>
            <person name="Dahlke C."/>
            <person name="Davenport L.B."/>
            <person name="Davies P."/>
            <person name="de Pablos B."/>
            <person name="Delcher A."/>
            <person name="Deng Z."/>
            <person name="Mays A.D."/>
            <person name="Dew I."/>
            <person name="Dietz S.M."/>
            <person name="Dodson K."/>
            <person name="Doup L.E."/>
            <person name="Downes M."/>
            <person name="Dugan-Rocha S."/>
            <person name="Dunkov B.C."/>
            <person name="Dunn P."/>
            <person name="Durbin K.J."/>
            <person name="Evangelista C.C."/>
            <person name="Ferraz C."/>
            <person name="Ferriera S."/>
            <person name="Fleischmann W."/>
            <person name="Fosler C."/>
            <person name="Gabrielian A.E."/>
            <person name="Garg N.S."/>
            <person name="Gelbart W.M."/>
            <person name="Glasser K."/>
            <person name="Glodek A."/>
            <person name="Gong F."/>
            <person name="Gorrell J.H."/>
            <person name="Gu Z."/>
            <person name="Guan P."/>
            <person name="Harris M."/>
            <person name="Harris N.L."/>
            <person name="Harvey D.A."/>
            <person name="Heiman T.J."/>
            <person name="Hernandez J.R."/>
            <person name="Houck J."/>
            <person name="Hostin D."/>
            <person name="Houston K.A."/>
            <person name="Howland T.J."/>
            <person name="Wei M.-H."/>
            <person name="Ibegwam C."/>
            <person name="Jalali M."/>
            <person name="Kalush F."/>
            <person name="Karpen G.H."/>
            <person name="Ke Z."/>
            <person name="Kennison J.A."/>
            <person name="Ketchum K.A."/>
            <person name="Kimmel B.E."/>
            <person name="Kodira C.D."/>
            <person name="Kraft C.L."/>
            <person name="Kravitz S."/>
            <person name="Kulp D."/>
            <person name="Lai Z."/>
            <person name="Lasko P."/>
            <person name="Lei Y."/>
            <person name="Levitsky A.A."/>
            <person name="Li J.H."/>
            <person name="Li Z."/>
            <person name="Liang Y."/>
            <person name="Lin X."/>
            <person name="Liu X."/>
            <person name="Mattei B."/>
            <person name="McIntosh T.C."/>
            <person name="McLeod M.P."/>
            <person name="McPherson D."/>
            <person name="Merkulov G."/>
            <person name="Milshina N.V."/>
            <person name="Mobarry C."/>
            <person name="Morris J."/>
            <person name="Moshrefi A."/>
            <person name="Mount S.M."/>
            <person name="Moy M."/>
            <person name="Murphy B."/>
            <person name="Murphy L."/>
            <person name="Muzny D.M."/>
            <person name="Nelson D.L."/>
            <person name="Nelson D.R."/>
            <person name="Nelson K.A."/>
            <person name="Nixon K."/>
            <person name="Nusskern D.R."/>
            <person name="Pacleb J.M."/>
            <person name="Palazzolo M."/>
            <person name="Pittman G.S."/>
            <person name="Pan S."/>
            <person name="Pollard J."/>
            <person name="Puri V."/>
            <person name="Reese M.G."/>
            <person name="Reinert K."/>
            <person name="Remington K."/>
            <person name="Saunders R.D.C."/>
            <person name="Scheeler F."/>
            <person name="Shen H."/>
            <person name="Shue B.C."/>
            <person name="Siden-Kiamos I."/>
            <person name="Simpson M."/>
            <person name="Skupski M.P."/>
            <person name="Smith T.J."/>
            <person name="Spier E."/>
            <person name="Spradling A.C."/>
            <person name="Stapleton M."/>
            <person name="Strong R."/>
            <person name="Sun E."/>
            <person name="Svirskas R."/>
            <person name="Tector C."/>
            <person name="Turner R."/>
            <person name="Venter E."/>
            <person name="Wang A.H."/>
            <person name="Wang X."/>
            <person name="Wang Z.-Y."/>
            <person name="Wassarman D.A."/>
            <person name="Weinstock G.M."/>
            <person name="Weissenbach J."/>
            <person name="Williams S.M."/>
            <person name="Woodage T."/>
            <person name="Worley K.C."/>
            <person name="Wu D."/>
            <person name="Yang S."/>
            <person name="Yao Q.A."/>
            <person name="Ye J."/>
            <person name="Yeh R.-F."/>
            <person name="Zaveri J.S."/>
            <person name="Zhan M."/>
            <person name="Zhang G."/>
            <person name="Zhao Q."/>
            <person name="Zheng L."/>
            <person name="Zheng X.H."/>
            <person name="Zhong F.N."/>
            <person name="Zhong W."/>
            <person name="Zhou X."/>
            <person name="Zhu S.C."/>
            <person name="Zhu X."/>
            <person name="Smith H.O."/>
            <person name="Gibbs R.A."/>
            <person name="Myers E.W."/>
            <person name="Rubin G.M."/>
            <person name="Venter J.C."/>
        </authorList>
    </citation>
    <scope>NUCLEOTIDE SEQUENCE [LARGE SCALE GENOMIC DNA]</scope>
    <source>
        <strain>Berkeley</strain>
    </source>
</reference>
<reference key="2">
    <citation type="journal article" date="2002" name="Genome Biol.">
        <title>Annotation of the Drosophila melanogaster euchromatic genome: a systematic review.</title>
        <authorList>
            <person name="Misra S."/>
            <person name="Crosby M.A."/>
            <person name="Mungall C.J."/>
            <person name="Matthews B.B."/>
            <person name="Campbell K.S."/>
            <person name="Hradecky P."/>
            <person name="Huang Y."/>
            <person name="Kaminker J.S."/>
            <person name="Millburn G.H."/>
            <person name="Prochnik S.E."/>
            <person name="Smith C.D."/>
            <person name="Tupy J.L."/>
            <person name="Whitfield E.J."/>
            <person name="Bayraktaroglu L."/>
            <person name="Berman B.P."/>
            <person name="Bettencourt B.R."/>
            <person name="Celniker S.E."/>
            <person name="de Grey A.D.N.J."/>
            <person name="Drysdale R.A."/>
            <person name="Harris N.L."/>
            <person name="Richter J."/>
            <person name="Russo S."/>
            <person name="Schroeder A.J."/>
            <person name="Shu S.Q."/>
            <person name="Stapleton M."/>
            <person name="Yamada C."/>
            <person name="Ashburner M."/>
            <person name="Gelbart W.M."/>
            <person name="Rubin G.M."/>
            <person name="Lewis S.E."/>
        </authorList>
    </citation>
    <scope>GENOME REANNOTATION</scope>
    <source>
        <strain>Berkeley</strain>
    </source>
</reference>
<reference key="3">
    <citation type="journal article" date="2002" name="Genome Biol.">
        <title>A Drosophila full-length cDNA resource.</title>
        <authorList>
            <person name="Stapleton M."/>
            <person name="Carlson J.W."/>
            <person name="Brokstein P."/>
            <person name="Yu C."/>
            <person name="Champe M."/>
            <person name="George R.A."/>
            <person name="Guarin H."/>
            <person name="Kronmiller B."/>
            <person name="Pacleb J.M."/>
            <person name="Park S."/>
            <person name="Wan K.H."/>
            <person name="Rubin G.M."/>
            <person name="Celniker S.E."/>
        </authorList>
    </citation>
    <scope>NUCLEOTIDE SEQUENCE [LARGE SCALE MRNA] OF 359-1384</scope>
    <source>
        <strain>Berkeley</strain>
        <tissue>Embryo</tissue>
    </source>
</reference>
<reference key="4">
    <citation type="journal article" date="2007" name="Mol. Biosyst.">
        <title>An integrated chemical, mass spectrometric and computational strategy for (quantitative) phosphoproteomics: application to Drosophila melanogaster Kc167 cells.</title>
        <authorList>
            <person name="Bodenmiller B."/>
            <person name="Mueller L.N."/>
            <person name="Pedrioli P.G.A."/>
            <person name="Pflieger D."/>
            <person name="Juenger M.A."/>
            <person name="Eng J.K."/>
            <person name="Aebersold R."/>
            <person name="Tao W.A."/>
        </authorList>
    </citation>
    <scope>PHOSPHORYLATION [LARGE SCALE ANALYSIS] AT SER-82</scope>
    <scope>IDENTIFICATION BY MASS SPECTROMETRY</scope>
</reference>
<reference key="5">
    <citation type="journal article" date="2008" name="J. Proteome Res.">
        <title>Phosphoproteome analysis of Drosophila melanogaster embryos.</title>
        <authorList>
            <person name="Zhai B."/>
            <person name="Villen J."/>
            <person name="Beausoleil S.A."/>
            <person name="Mintseris J."/>
            <person name="Gygi S.P."/>
        </authorList>
    </citation>
    <scope>PHOSPHORYLATION [LARGE SCALE ANALYSIS] AT SER-82; SER-85; SER-96; SER-1094; SER-1095; SER-1117; SER-1119; SER-1221; SER-1225; SER-1227; SER-1230; SER-1250 AND SER-1251</scope>
    <scope>IDENTIFICATION BY MASS SPECTROMETRY</scope>
    <source>
        <tissue>Embryo</tissue>
    </source>
</reference>
<proteinExistence type="evidence at protein level"/>
<accession>Q9VYA7</accession>
<accession>Q960Z7</accession>
<organism>
    <name type="scientific">Drosophila melanogaster</name>
    <name type="common">Fruit fly</name>
    <dbReference type="NCBI Taxonomy" id="7227"/>
    <lineage>
        <taxon>Eukaryota</taxon>
        <taxon>Metazoa</taxon>
        <taxon>Ecdysozoa</taxon>
        <taxon>Arthropoda</taxon>
        <taxon>Hexapoda</taxon>
        <taxon>Insecta</taxon>
        <taxon>Pterygota</taxon>
        <taxon>Neoptera</taxon>
        <taxon>Endopterygota</taxon>
        <taxon>Diptera</taxon>
        <taxon>Brachycera</taxon>
        <taxon>Muscomorpha</taxon>
        <taxon>Ephydroidea</taxon>
        <taxon>Drosophilidae</taxon>
        <taxon>Drosophila</taxon>
        <taxon>Sophophora</taxon>
    </lineage>
</organism>